<proteinExistence type="inferred from homology"/>
<dbReference type="EC" id="2.7.-.-" evidence="1"/>
<dbReference type="EMBL" id="CU928158">
    <property type="protein sequence ID" value="CAQ91107.1"/>
    <property type="molecule type" value="Genomic_DNA"/>
</dbReference>
<dbReference type="RefSeq" id="WP_000187549.1">
    <property type="nucleotide sequence ID" value="NC_011740.1"/>
</dbReference>
<dbReference type="SMR" id="B7LTZ9"/>
<dbReference type="GeneID" id="75059754"/>
<dbReference type="KEGG" id="efe:EFER_3645"/>
<dbReference type="HOGENOM" id="CLU_006533_0_0_6"/>
<dbReference type="OrthoDB" id="9795390at2"/>
<dbReference type="UniPathway" id="UPA00232"/>
<dbReference type="Proteomes" id="UP000000745">
    <property type="component" value="Chromosome"/>
</dbReference>
<dbReference type="GO" id="GO:0005886">
    <property type="term" value="C:plasma membrane"/>
    <property type="evidence" value="ECO:0007669"/>
    <property type="project" value="UniProtKB-SubCell"/>
</dbReference>
<dbReference type="GO" id="GO:0005524">
    <property type="term" value="F:ATP binding"/>
    <property type="evidence" value="ECO:0007669"/>
    <property type="project" value="UniProtKB-KW"/>
</dbReference>
<dbReference type="GO" id="GO:0004672">
    <property type="term" value="F:protein kinase activity"/>
    <property type="evidence" value="ECO:0007669"/>
    <property type="project" value="UniProtKB-UniRule"/>
</dbReference>
<dbReference type="GO" id="GO:0010795">
    <property type="term" value="P:regulation of ubiquinone biosynthetic process"/>
    <property type="evidence" value="ECO:0007669"/>
    <property type="project" value="UniProtKB-UniRule"/>
</dbReference>
<dbReference type="GO" id="GO:0006744">
    <property type="term" value="P:ubiquinone biosynthetic process"/>
    <property type="evidence" value="ECO:0007669"/>
    <property type="project" value="UniProtKB-UniPathway"/>
</dbReference>
<dbReference type="CDD" id="cd13972">
    <property type="entry name" value="UbiB"/>
    <property type="match status" value="1"/>
</dbReference>
<dbReference type="HAMAP" id="MF_00414">
    <property type="entry name" value="UbiB"/>
    <property type="match status" value="1"/>
</dbReference>
<dbReference type="InterPro" id="IPR004147">
    <property type="entry name" value="ABC1_dom"/>
</dbReference>
<dbReference type="InterPro" id="IPR011009">
    <property type="entry name" value="Kinase-like_dom_sf"/>
</dbReference>
<dbReference type="InterPro" id="IPR010232">
    <property type="entry name" value="UbiB"/>
</dbReference>
<dbReference type="InterPro" id="IPR045308">
    <property type="entry name" value="UbiB_bact"/>
</dbReference>
<dbReference type="InterPro" id="IPR050154">
    <property type="entry name" value="UbiB_kinase"/>
</dbReference>
<dbReference type="NCBIfam" id="NF003404">
    <property type="entry name" value="PRK04750.1"/>
    <property type="match status" value="1"/>
</dbReference>
<dbReference type="NCBIfam" id="TIGR01982">
    <property type="entry name" value="UbiB"/>
    <property type="match status" value="1"/>
</dbReference>
<dbReference type="PANTHER" id="PTHR10566">
    <property type="entry name" value="CHAPERONE-ACTIVITY OF BC1 COMPLEX CABC1 -RELATED"/>
    <property type="match status" value="1"/>
</dbReference>
<dbReference type="PANTHER" id="PTHR10566:SF113">
    <property type="entry name" value="PROTEIN ACTIVITY OF BC1 COMPLEX KINASE 7, CHLOROPLASTIC"/>
    <property type="match status" value="1"/>
</dbReference>
<dbReference type="Pfam" id="PF03109">
    <property type="entry name" value="ABC1"/>
    <property type="match status" value="1"/>
</dbReference>
<dbReference type="SUPFAM" id="SSF56112">
    <property type="entry name" value="Protein kinase-like (PK-like)"/>
    <property type="match status" value="1"/>
</dbReference>
<reference key="1">
    <citation type="journal article" date="2009" name="PLoS Genet.">
        <title>Organised genome dynamics in the Escherichia coli species results in highly diverse adaptive paths.</title>
        <authorList>
            <person name="Touchon M."/>
            <person name="Hoede C."/>
            <person name="Tenaillon O."/>
            <person name="Barbe V."/>
            <person name="Baeriswyl S."/>
            <person name="Bidet P."/>
            <person name="Bingen E."/>
            <person name="Bonacorsi S."/>
            <person name="Bouchier C."/>
            <person name="Bouvet O."/>
            <person name="Calteau A."/>
            <person name="Chiapello H."/>
            <person name="Clermont O."/>
            <person name="Cruveiller S."/>
            <person name="Danchin A."/>
            <person name="Diard M."/>
            <person name="Dossat C."/>
            <person name="Karoui M.E."/>
            <person name="Frapy E."/>
            <person name="Garry L."/>
            <person name="Ghigo J.M."/>
            <person name="Gilles A.M."/>
            <person name="Johnson J."/>
            <person name="Le Bouguenec C."/>
            <person name="Lescat M."/>
            <person name="Mangenot S."/>
            <person name="Martinez-Jehanne V."/>
            <person name="Matic I."/>
            <person name="Nassif X."/>
            <person name="Oztas S."/>
            <person name="Petit M.A."/>
            <person name="Pichon C."/>
            <person name="Rouy Z."/>
            <person name="Ruf C.S."/>
            <person name="Schneider D."/>
            <person name="Tourret J."/>
            <person name="Vacherie B."/>
            <person name="Vallenet D."/>
            <person name="Medigue C."/>
            <person name="Rocha E.P.C."/>
            <person name="Denamur E."/>
        </authorList>
    </citation>
    <scope>NUCLEOTIDE SEQUENCE [LARGE SCALE GENOMIC DNA]</scope>
    <source>
        <strain>ATCC 35469 / DSM 13698 / BCRC 15582 / CCUG 18766 / IAM 14443 / JCM 21226 / LMG 7866 / NBRC 102419 / NCTC 12128 / CDC 0568-73</strain>
    </source>
</reference>
<accession>B7LTZ9</accession>
<organism>
    <name type="scientific">Escherichia fergusonii (strain ATCC 35469 / DSM 13698 / CCUG 18766 / IAM 14443 / JCM 21226 / LMG 7866 / NBRC 102419 / NCTC 12128 / CDC 0568-73)</name>
    <dbReference type="NCBI Taxonomy" id="585054"/>
    <lineage>
        <taxon>Bacteria</taxon>
        <taxon>Pseudomonadati</taxon>
        <taxon>Pseudomonadota</taxon>
        <taxon>Gammaproteobacteria</taxon>
        <taxon>Enterobacterales</taxon>
        <taxon>Enterobacteriaceae</taxon>
        <taxon>Escherichia</taxon>
    </lineage>
</organism>
<name>UBIB_ESCF3</name>
<evidence type="ECO:0000255" key="1">
    <source>
        <dbReference type="HAMAP-Rule" id="MF_00414"/>
    </source>
</evidence>
<feature type="chain" id="PRO_1000123911" description="Probable protein kinase UbiB">
    <location>
        <begin position="1"/>
        <end position="546"/>
    </location>
</feature>
<feature type="transmembrane region" description="Helical" evidence="1">
    <location>
        <begin position="501"/>
        <end position="521"/>
    </location>
</feature>
<feature type="transmembrane region" description="Helical" evidence="1">
    <location>
        <begin position="522"/>
        <end position="542"/>
    </location>
</feature>
<feature type="domain" description="Protein kinase" evidence="1">
    <location>
        <begin position="124"/>
        <end position="502"/>
    </location>
</feature>
<feature type="active site" description="Proton acceptor" evidence="1">
    <location>
        <position position="288"/>
    </location>
</feature>
<feature type="binding site" evidence="1">
    <location>
        <begin position="130"/>
        <end position="138"/>
    </location>
    <ligand>
        <name>ATP</name>
        <dbReference type="ChEBI" id="CHEBI:30616"/>
    </ligand>
</feature>
<feature type="binding site" evidence="1">
    <location>
        <position position="153"/>
    </location>
    <ligand>
        <name>ATP</name>
        <dbReference type="ChEBI" id="CHEBI:30616"/>
    </ligand>
</feature>
<keyword id="KW-0067">ATP-binding</keyword>
<keyword id="KW-0997">Cell inner membrane</keyword>
<keyword id="KW-1003">Cell membrane</keyword>
<keyword id="KW-0418">Kinase</keyword>
<keyword id="KW-0472">Membrane</keyword>
<keyword id="KW-0547">Nucleotide-binding</keyword>
<keyword id="KW-0808">Transferase</keyword>
<keyword id="KW-0812">Transmembrane</keyword>
<keyword id="KW-1133">Transmembrane helix</keyword>
<keyword id="KW-0831">Ubiquinone biosynthesis</keyword>
<comment type="function">
    <text evidence="1">Is probably a protein kinase regulator of UbiI activity which is involved in aerobic coenzyme Q (ubiquinone) biosynthesis.</text>
</comment>
<comment type="pathway">
    <text>Cofactor biosynthesis; ubiquinone biosynthesis [regulation].</text>
</comment>
<comment type="subcellular location">
    <subcellularLocation>
        <location evidence="1">Cell inner membrane</location>
        <topology evidence="1">Multi-pass membrane protein</topology>
    </subcellularLocation>
</comment>
<comment type="similarity">
    <text evidence="1">Belongs to the ABC1 family. UbiB subfamily.</text>
</comment>
<protein>
    <recommendedName>
        <fullName evidence="1">Probable protein kinase UbiB</fullName>
        <ecNumber evidence="1">2.7.-.-</ecNumber>
    </recommendedName>
    <alternativeName>
        <fullName evidence="1">Ubiquinone biosynthesis protein UbiB</fullName>
    </alternativeName>
</protein>
<sequence>MTPGEVRRLYFIIRTFLSYGLDELIPKMRITLPLRLWRYSLFWMPNRHKDKPLGERLRLALQELGPVWIKFGQMLSTRRDLFPPHIADQLALLQDKVAPFDGRLAKQQIEAAMGGLPVEAWFDDFDIKPLASASIAQVHTARLKSNGKEVVIKVIRPDILPVIKADLKLIYRLARWVPRLLPDGRRLRPTEVVREYEKTLIDELNLLRESANAIQLRRNFEDSPMLYIPEVYPDYCSEGMMVMERIYGIPVSDVAALEKNGTNMKLLAERGVQVFFTQVFRDSFFHADMHPGNIFVSYEHPENPKYIGIDCGIVGSLNKEDKRYLAENFIAFFNRDYRKVAELHVDSGWVPPDTNVEEFEFAIRTVCEPIFEKPLAEISFGHVLLNLFNTARRFNMEVQPQLVLLQKTLLYIEGVGRQLYPQLDLWKTAKPFLESWIKDQVGIPALVRALKEKAPFWVEKMPELPELVYDSLRQGKYLQHSVDKIARELQSNHVRQGQSRYLLGIGATLVLSGTFLLVSRPEWGLMPGWLMAAGLVAWFVGWRKTR</sequence>
<gene>
    <name evidence="1" type="primary">ubiB</name>
    <name type="ordered locus">EFER_3645</name>
</gene>